<organism>
    <name type="scientific">Mus musculus</name>
    <name type="common">Mouse</name>
    <dbReference type="NCBI Taxonomy" id="10090"/>
    <lineage>
        <taxon>Eukaryota</taxon>
        <taxon>Metazoa</taxon>
        <taxon>Chordata</taxon>
        <taxon>Craniata</taxon>
        <taxon>Vertebrata</taxon>
        <taxon>Euteleostomi</taxon>
        <taxon>Mammalia</taxon>
        <taxon>Eutheria</taxon>
        <taxon>Euarchontoglires</taxon>
        <taxon>Glires</taxon>
        <taxon>Rodentia</taxon>
        <taxon>Myomorpha</taxon>
        <taxon>Muroidea</taxon>
        <taxon>Muridae</taxon>
        <taxon>Murinae</taxon>
        <taxon>Mus</taxon>
        <taxon>Mus</taxon>
    </lineage>
</organism>
<accession>Q61501</accession>
<accession>Q80VZ3</accession>
<reference key="1">
    <citation type="journal article" date="1994" name="Mol. Cell. Biol.">
        <title>Cloning, chromosomal location, and characterization of mouse E2F1.</title>
        <authorList>
            <person name="Li Y."/>
            <person name="Slansky J.E."/>
            <person name="Myers D.J."/>
            <person name="Drinkwater N.R."/>
            <person name="Kaelin W.G. Jr."/>
            <person name="Farnham P.J."/>
        </authorList>
    </citation>
    <scope>NUCLEOTIDE SEQUENCE [MRNA]</scope>
    <source>
        <strain>Swiss albino</strain>
    </source>
</reference>
<reference key="2">
    <citation type="journal article" date="2004" name="Genome Res.">
        <title>The status, quality, and expansion of the NIH full-length cDNA project: the Mammalian Gene Collection (MGC).</title>
        <authorList>
            <consortium name="The MGC Project Team"/>
        </authorList>
    </citation>
    <scope>NUCLEOTIDE SEQUENCE [LARGE SCALE MRNA]</scope>
    <source>
        <tissue>Embryo</tissue>
    </source>
</reference>
<reference key="3">
    <citation type="journal article" date="1993" name="Mol. Cell. Biol.">
        <title>A bipartite nuclear localization signal in the retinoblastoma gene product and its importance for biological activity.</title>
        <authorList>
            <person name="Zacksenhaus E."/>
            <person name="Bremner R."/>
            <person name="Phillips R.A."/>
            <person name="Gallie B.L."/>
        </authorList>
    </citation>
    <scope>INTERACTION WITH RB1</scope>
</reference>
<reference key="4">
    <citation type="journal article" date="1997" name="Mech. Dev.">
        <title>Expression patterns of the E2F family of transcription factors during mouse nervous system development.</title>
        <authorList>
            <person name="Dagnino L."/>
            <person name="Fry C.J."/>
            <person name="Bartley S.M."/>
            <person name="Farnham P."/>
            <person name="Gallie B.L."/>
            <person name="Phillips R.A."/>
        </authorList>
    </citation>
    <scope>DEVELOPMENTAL STAGE</scope>
</reference>
<reference key="5">
    <citation type="journal article" date="1998" name="Oncogene">
        <title>E2F-1-induced p53-independent apoptosis in transgenic mice.</title>
        <authorList>
            <person name="Holmberg C."/>
            <person name="Helin K."/>
            <person name="Sehested M."/>
            <person name="Karlstroem O."/>
        </authorList>
    </citation>
    <scope>FUNCTION IN APOPTOSIS</scope>
</reference>
<reference key="6">
    <citation type="journal article" date="2001" name="Cell">
        <title>E2F repression by C/EBPalpha is required for adipogenesis and granulopoiesis in vivo.</title>
        <authorList>
            <person name="Porse B.T."/>
            <person name="Pedersen T.A."/>
            <person name="Xu X."/>
            <person name="Lindberg B."/>
            <person name="Wewer U.M."/>
            <person name="Friis-Hansen L."/>
            <person name="Nerlov C."/>
        </authorList>
    </citation>
    <scope>FUNCTION</scope>
</reference>
<reference key="7">
    <citation type="journal article" date="2005" name="Mol. Biol. Cell">
        <title>EAPP, a novel E2F binding protein that modulates E2F-dependent transcription.</title>
        <authorList>
            <person name="Novy M."/>
            <person name="Pohn R."/>
            <person name="Andorfer P."/>
            <person name="Novy-Weiland T."/>
            <person name="Galos B."/>
            <person name="Schwarzmayr L."/>
            <person name="Rotheneder H."/>
        </authorList>
    </citation>
    <scope>INTERACTION WITH EAPP</scope>
</reference>
<reference key="8">
    <citation type="journal article" date="2010" name="J. Cell Sci.">
        <title>Acetylation of Rb by PCAF is required for nuclear localization and keratinocyte differentiation.</title>
        <authorList>
            <person name="Pickard A."/>
            <person name="Wong P.P."/>
            <person name="McCance D.J."/>
        </authorList>
    </citation>
    <scope>INTERACTION WITH RB1</scope>
</reference>
<reference key="9">
    <citation type="journal article" date="2010" name="Mol. Cell. Biol.">
        <title>Repression of transcriptional activity of C/EBPalpha by E2F-dimerization partner complexes.</title>
        <authorList>
            <person name="Zaragoza K."/>
            <person name="Begay V."/>
            <person name="Schuetz A."/>
            <person name="Heinemann U."/>
            <person name="Leutz A."/>
        </authorList>
    </citation>
    <scope>FUNCTION</scope>
</reference>
<reference key="10">
    <citation type="journal article" date="2023" name="Cell Rep.">
        <title>Plakophilin 3 facilitates G1/S phase transition and enhances proliferation by capturing RB protein in the cytoplasm and promoting EGFR signaling.</title>
        <authorList>
            <person name="Mueller L."/>
            <person name="Keil R."/>
            <person name="Hatzfeld M."/>
        </authorList>
    </citation>
    <scope>INTERACTION WITH RB1</scope>
</reference>
<keyword id="KW-0007">Acetylation</keyword>
<keyword id="KW-0010">Activator</keyword>
<keyword id="KW-0053">Apoptosis</keyword>
<keyword id="KW-0131">Cell cycle</keyword>
<keyword id="KW-0238">DNA-binding</keyword>
<keyword id="KW-0488">Methylation</keyword>
<keyword id="KW-0539">Nucleus</keyword>
<keyword id="KW-0597">Phosphoprotein</keyword>
<keyword id="KW-1185">Reference proteome</keyword>
<keyword id="KW-0804">Transcription</keyword>
<keyword id="KW-0805">Transcription regulation</keyword>
<keyword id="KW-0832">Ubl conjugation</keyword>
<name>E2F1_MOUSE</name>
<evidence type="ECO:0000250" key="1">
    <source>
        <dbReference type="UniProtKB" id="Q01094"/>
    </source>
</evidence>
<evidence type="ECO:0000255" key="2"/>
<evidence type="ECO:0000256" key="3">
    <source>
        <dbReference type="SAM" id="MobiDB-lite"/>
    </source>
</evidence>
<evidence type="ECO:0000269" key="4">
    <source>
    </source>
</evidence>
<evidence type="ECO:0000269" key="5">
    <source>
    </source>
</evidence>
<evidence type="ECO:0000269" key="6">
    <source>
    </source>
</evidence>
<evidence type="ECO:0000269" key="7">
    <source>
    </source>
</evidence>
<evidence type="ECO:0000269" key="8">
    <source>
    </source>
</evidence>
<evidence type="ECO:0000269" key="9">
    <source>
    </source>
</evidence>
<evidence type="ECO:0000269" key="10">
    <source>
    </source>
</evidence>
<evidence type="ECO:0000303" key="11">
    <source>
    </source>
</evidence>
<evidence type="ECO:0000305" key="12"/>
<evidence type="ECO:0000312" key="13">
    <source>
        <dbReference type="MGI" id="MGI:101941"/>
    </source>
</evidence>
<proteinExistence type="evidence at protein level"/>
<protein>
    <recommendedName>
        <fullName evidence="11">Transcription factor E2F1</fullName>
        <shortName evidence="11">E2F-1</shortName>
    </recommendedName>
</protein>
<feature type="chain" id="PRO_0000219462" description="Transcription factor E2F1">
    <location>
        <begin position="1"/>
        <end position="430"/>
    </location>
</feature>
<feature type="DNA-binding region" evidence="2">
    <location>
        <begin position="105"/>
        <end position="189"/>
    </location>
</feature>
<feature type="region of interest" description="Cyclin A:CDK2 binding" evidence="1">
    <location>
        <begin position="62"/>
        <end position="103"/>
    </location>
</feature>
<feature type="region of interest" description="Interaction with BIRC2/c-IAP1" evidence="1">
    <location>
        <begin position="84"/>
        <end position="186"/>
    </location>
</feature>
<feature type="region of interest" description="Disordered" evidence="3">
    <location>
        <begin position="95"/>
        <end position="123"/>
    </location>
</feature>
<feature type="region of interest" description="Leucine-zipper">
    <location>
        <begin position="148"/>
        <end position="169"/>
    </location>
</feature>
<feature type="region of interest" description="Required for interaction with TRIM28" evidence="1">
    <location>
        <begin position="187"/>
        <end position="375"/>
    </location>
</feature>
<feature type="region of interest" description="Dimerization" evidence="2">
    <location>
        <begin position="190"/>
        <end position="279"/>
    </location>
</feature>
<feature type="region of interest" description="Disordered" evidence="3">
    <location>
        <begin position="294"/>
        <end position="340"/>
    </location>
</feature>
<feature type="region of interest" description="Transactivation" evidence="1">
    <location>
        <begin position="361"/>
        <end position="430"/>
    </location>
</feature>
<feature type="region of interest" description="RB1 binding" evidence="1">
    <location>
        <begin position="402"/>
        <end position="419"/>
    </location>
</feature>
<feature type="short sequence motif" description="DEF box">
    <location>
        <begin position="153"/>
        <end position="189"/>
    </location>
</feature>
<feature type="compositionally biased region" description="Pro residues" evidence="3">
    <location>
        <begin position="324"/>
        <end position="333"/>
    </location>
</feature>
<feature type="modified residue" description="N6-acetyllysine" evidence="1">
    <location>
        <position position="112"/>
    </location>
</feature>
<feature type="modified residue" description="N6-acetyllysine" evidence="1">
    <location>
        <position position="115"/>
    </location>
</feature>
<feature type="modified residue" description="N6-acetyllysine" evidence="1">
    <location>
        <position position="120"/>
    </location>
</feature>
<feature type="modified residue" description="N6-methyllysine; by SETD7" evidence="1">
    <location>
        <position position="180"/>
    </location>
</feature>
<feature type="modified residue" description="Phosphoserine" evidence="1">
    <location>
        <position position="368"/>
    </location>
</feature>
<feature type="modified residue" description="Phosphoserine" evidence="1">
    <location>
        <position position="396"/>
    </location>
</feature>
<feature type="modified residue" description="Phosphothreonine" evidence="1">
    <location>
        <position position="426"/>
    </location>
</feature>
<comment type="function">
    <text evidence="1 4 6 10">Transcription activator that binds DNA cooperatively with DP proteins through the E2 recognition site, 5'-TTTC[CG]CGC-3' found in the promoter region of a number of genes whose products are involved in cell cycle regulation or in DNA replication (PubMed:11672531, PubMed:20176812, PubMed:9674698). The DRTF1/E2F complex functions in the control of cell-cycle progression from G1 to S phase (By similarity). E2F1 binds preferentially RB1 in a cell-cycle dependent manner (By similarity). It can mediate both cell proliferation and TP53/p53-dependent apoptosis (PubMed:9674698). Blocks adipocyte differentiation by binding to specific promoters repressing CEBPA binding to its target gene promoters (PubMed:11672531, PubMed:20176812). Directly activates transcription of PEG10 (By similarity). Positively regulates transcription of RRP1B (By similarity).</text>
</comment>
<comment type="activity regulation">
    <text evidence="1">BIRC2/c-IAP1 stimulates its transcriptional activity.</text>
</comment>
<comment type="subunit">
    <text evidence="1 5 7 8">Component of the DRTF1/E2F transcription factor complex. Forms heterodimers with DP family members. The E2F1 complex binds specifically hypophosphorylated RB1, the interaction represses E2F1-driven transcription (PubMed:36689330, PubMed:8336704). During the cell cycle, RB1 becomes phosphorylated in mid-to-late G1 phase, detaches from the DRTF1/E2F complex, rendering E2F transcriptionally active. Interacts with TRRAP, which probably mediates its interaction with histone acetyltransferase complexes, leading to transcription activation. Binds TOPBP1 and EAPP. Interacts with ARID3A. Interacts with TRIM28; the interaction inhibits E2F1 acetylation through recruiting HDAC1 and represses its transcriptional activity. Interaction with KAT2B; the interaction acetylates E2F1 enhancing its DNA-binding and transcriptional activity. Interacts with BIRC2/c-IAP1 (via BIR domains). The complex TFDP1:E2F1 interacts with CEBPA; the interaction prevents CEBPA binding to target genes promoters and represses its transcriptional activity. Interacts with RRP1B (By similarity). Interacts with HCFC1 (By similarity). Interacts with KMT2E; the interaction is probably indirect and is mediated via HCFC1 (By similarity). Interacts with DCAF5 and L3MBTL3; the interaction requires methylation at Lys-180 and is necessary to target E2F1 for ubiquitination by the CRL4-DCAF5 E3 ubiquitin ligase complex (By similarity).</text>
</comment>
<comment type="interaction">
    <interactant intactId="EBI-1025536">
        <id>Q61501</id>
    </interactant>
    <interactant intactId="EBI-1801080">
        <id>P25233</id>
        <label>Ndn</label>
    </interactant>
    <organismsDiffer>false</organismsDiffer>
    <experiments>6</experiments>
</comment>
<comment type="interaction">
    <interactant intactId="EBI-1025536">
        <id>Q61501</id>
    </interactant>
    <interactant intactId="EBI-5529102">
        <id>Q9CPR8</id>
        <label>Nsmce3</label>
    </interactant>
    <organismsDiffer>false</organismsDiffer>
    <experiments>5</experiments>
</comment>
<comment type="subcellular location">
    <subcellularLocation>
        <location evidence="1">Nucleus</location>
    </subcellularLocation>
</comment>
<comment type="developmental stage">
    <text evidence="9">In the developing nervous system, first detected in the neural tube at 9.5 dpc. By 10.5 dpc, levels increase throughout the brain, with highest levels in the hindbrain and in the spinal cord, expressed only in the rostral half. By 11.5 dpc, expression found throughout the brain and spinal cord. From 12.5 dpc, expression restricted to the ventricular regions of the brain, peaks at 13.5 dpc and declines thereafter. Only weak expression in the developing spinal cord from 11.5-16.5 dpc. In the developing retina, expression is confined to the undifferentiated retinoblastic cell layer. In other developing tissues, E2F1 is expressed in kidney, lung, liver hepatocytes, heart and thymus. Highest levels in liver. Absent in choroid plexus.</text>
</comment>
<comment type="PTM">
    <text evidence="1">Phosphorylated by CDK2 and cyclin A-CDK2 in the S-phase. Phosphorylation by CHEK2 stabilizes E2F1 upon DNA damage and regulates its effect on transcription and apoptosis. Phosphorylation at Ser-396 by GSK3B promotes interaction with USP11, leading to its deubiquitination and stabilization.</text>
</comment>
<comment type="PTM">
    <text evidence="1">Ubiquitinated via 'Lys-63'-linked ubiquitin, leading to its degradation. Deubiquitinated by USP11 following phosphorylation by GSK3B, promoting its stability.</text>
</comment>
<comment type="PTM">
    <text evidence="1">Acetylation stimulates DNA-binding. Enhanced under stress conditions such as DNA damage and inhibited by retinoblastoma protein RB1. Regulated by KAP1/TRIM28 which recruits HDAC1 to E2F1 resulting in deacetylation. Acetylated by P/CAF/KAT2B (By similarity).</text>
</comment>
<comment type="PTM">
    <text evidence="1">Methylation at Lys-180 by SETD7 promotes E2F1 ubiquitin-dependent proteasomal degradation.</text>
</comment>
<comment type="similarity">
    <text evidence="12">Belongs to the E2F/DP family.</text>
</comment>
<gene>
    <name evidence="11 13" type="primary">E2f1</name>
</gene>
<sequence length="430" mass="46323">MAVAPAGGQHAPALEALLGAGALRLLDSSQIVIISTAPDVGAPQLPAAPPTGPRDSDVLLFATPQAPRPAPSAPRPALGRPPVKRRLDLETDHQYLAGSSGPFRGRGRHPGKGVKSPGEKSRYETSLNLTTKRFLELLSRSADGVVDLNWAAEVLKVQKRRIYDITNVLEGIQLIAKKSKNHIQWLGSHTMVGIGKRLEGLTQDLQQLQESEQQLDHLMHICTTQLQLLSEDSDTQRLAYVTCQDLRSIADPAEQMVIVIKAPPETQLQAVDSSETFQISLKSKQGPIDVFLCPEESADGISPGKTSCQETSSGEDRTADSGPAGPPPSPPSTSPALDPSQSLLGLEQEAVLPRMGHLRVPMEEDQLSPLVAADSLLEHVKEDFSGLLPGEFISLSPPHEALDYHFGLEEGEGIRDLFDCDFGDLTPLDF</sequence>
<dbReference type="EMBL" id="L21973">
    <property type="protein sequence ID" value="AAA83217.1"/>
    <property type="molecule type" value="mRNA"/>
</dbReference>
<dbReference type="EMBL" id="BC052160">
    <property type="protein sequence ID" value="AAH52160.2"/>
    <property type="molecule type" value="mRNA"/>
</dbReference>
<dbReference type="CCDS" id="CCDS16935.1"/>
<dbReference type="PIR" id="A56209">
    <property type="entry name" value="A56209"/>
</dbReference>
<dbReference type="RefSeq" id="NP_031917.1">
    <property type="nucleotide sequence ID" value="NM_007891.5"/>
</dbReference>
<dbReference type="SMR" id="Q61501"/>
<dbReference type="BioGRID" id="199350">
    <property type="interactions" value="21"/>
</dbReference>
<dbReference type="ComplexPortal" id="CPX-159">
    <property type="entry name" value="E2F1-DP1 transcription factor complex"/>
</dbReference>
<dbReference type="ComplexPortal" id="CPX-160">
    <property type="entry name" value="RB1-E2F1-DP1 transcriptional repressor complex"/>
</dbReference>
<dbReference type="CORUM" id="Q61501"/>
<dbReference type="FunCoup" id="Q61501">
    <property type="interactions" value="1720"/>
</dbReference>
<dbReference type="IntAct" id="Q61501">
    <property type="interactions" value="7"/>
</dbReference>
<dbReference type="MINT" id="Q61501"/>
<dbReference type="STRING" id="10090.ENSMUSP00000099434"/>
<dbReference type="GlyGen" id="Q61501">
    <property type="glycosylation" value="1 site, 1 O-linked glycan (1 site)"/>
</dbReference>
<dbReference type="iPTMnet" id="Q61501"/>
<dbReference type="PhosphoSitePlus" id="Q61501"/>
<dbReference type="PaxDb" id="10090-ENSMUSP00000099434"/>
<dbReference type="ProteomicsDB" id="277664"/>
<dbReference type="Antibodypedia" id="3771">
    <property type="antibodies" value="1449 antibodies from 47 providers"/>
</dbReference>
<dbReference type="DNASU" id="13555"/>
<dbReference type="Ensembl" id="ENSMUST00000103145.11">
    <property type="protein sequence ID" value="ENSMUSP00000099434.5"/>
    <property type="gene ID" value="ENSMUSG00000027490.18"/>
</dbReference>
<dbReference type="GeneID" id="13555"/>
<dbReference type="KEGG" id="mmu:13555"/>
<dbReference type="UCSC" id="uc008njk.2">
    <property type="organism name" value="mouse"/>
</dbReference>
<dbReference type="AGR" id="MGI:101941"/>
<dbReference type="CTD" id="1869"/>
<dbReference type="MGI" id="MGI:101941">
    <property type="gene designation" value="E2f1"/>
</dbReference>
<dbReference type="VEuPathDB" id="HostDB:ENSMUSG00000027490"/>
<dbReference type="eggNOG" id="KOG2577">
    <property type="taxonomic scope" value="Eukaryota"/>
</dbReference>
<dbReference type="GeneTree" id="ENSGT00940000159472"/>
<dbReference type="HOGENOM" id="CLU_032091_0_1_1"/>
<dbReference type="InParanoid" id="Q61501"/>
<dbReference type="OMA" id="HVMEQQI"/>
<dbReference type="OrthoDB" id="1743261at2759"/>
<dbReference type="PhylomeDB" id="Q61501"/>
<dbReference type="TreeFam" id="TF105566"/>
<dbReference type="Reactome" id="R-MMU-68911">
    <property type="pathway name" value="G2 Phase"/>
</dbReference>
<dbReference type="Reactome" id="R-MMU-69231">
    <property type="pathway name" value="Cyclin D associated events in G1"/>
</dbReference>
<dbReference type="BioGRID-ORCS" id="13555">
    <property type="hits" value="3 hits in 80 CRISPR screens"/>
</dbReference>
<dbReference type="ChiTaRS" id="E2f1">
    <property type="organism name" value="mouse"/>
</dbReference>
<dbReference type="PRO" id="PR:Q61501"/>
<dbReference type="Proteomes" id="UP000000589">
    <property type="component" value="Chromosome 2"/>
</dbReference>
<dbReference type="RNAct" id="Q61501">
    <property type="molecule type" value="protein"/>
</dbReference>
<dbReference type="Bgee" id="ENSMUSG00000027490">
    <property type="expression patterns" value="Expressed in animal zygote and 220 other cell types or tissues"/>
</dbReference>
<dbReference type="ExpressionAtlas" id="Q61501">
    <property type="expression patterns" value="baseline and differential"/>
</dbReference>
<dbReference type="GO" id="GO:0005813">
    <property type="term" value="C:centrosome"/>
    <property type="evidence" value="ECO:0007669"/>
    <property type="project" value="Ensembl"/>
</dbReference>
<dbReference type="GO" id="GO:0000785">
    <property type="term" value="C:chromatin"/>
    <property type="evidence" value="ECO:0000314"/>
    <property type="project" value="BHF-UCL"/>
</dbReference>
<dbReference type="GO" id="GO:0005737">
    <property type="term" value="C:cytoplasm"/>
    <property type="evidence" value="ECO:0000314"/>
    <property type="project" value="MGI"/>
</dbReference>
<dbReference type="GO" id="GO:0000228">
    <property type="term" value="C:nuclear chromosome"/>
    <property type="evidence" value="ECO:0007669"/>
    <property type="project" value="Ensembl"/>
</dbReference>
<dbReference type="GO" id="GO:0005654">
    <property type="term" value="C:nucleoplasm"/>
    <property type="evidence" value="ECO:0000304"/>
    <property type="project" value="Reactome"/>
</dbReference>
<dbReference type="GO" id="GO:0005634">
    <property type="term" value="C:nucleus"/>
    <property type="evidence" value="ECO:0000314"/>
    <property type="project" value="MGI"/>
</dbReference>
<dbReference type="GO" id="GO:0035189">
    <property type="term" value="C:Rb-E2F complex"/>
    <property type="evidence" value="ECO:0000266"/>
    <property type="project" value="ComplexPortal"/>
</dbReference>
<dbReference type="GO" id="GO:0090575">
    <property type="term" value="C:RNA polymerase II transcription regulator complex"/>
    <property type="evidence" value="ECO:0000266"/>
    <property type="project" value="ComplexPortal"/>
</dbReference>
<dbReference type="GO" id="GO:0005667">
    <property type="term" value="C:transcription regulator complex"/>
    <property type="evidence" value="ECO:0000314"/>
    <property type="project" value="MGI"/>
</dbReference>
<dbReference type="GO" id="GO:0003677">
    <property type="term" value="F:DNA binding"/>
    <property type="evidence" value="ECO:0000266"/>
    <property type="project" value="MGI"/>
</dbReference>
<dbReference type="GO" id="GO:0001216">
    <property type="term" value="F:DNA-binding transcription activator activity"/>
    <property type="evidence" value="ECO:0000314"/>
    <property type="project" value="UniProt"/>
</dbReference>
<dbReference type="GO" id="GO:0003700">
    <property type="term" value="F:DNA-binding transcription factor activity"/>
    <property type="evidence" value="ECO:0000314"/>
    <property type="project" value="MGI"/>
</dbReference>
<dbReference type="GO" id="GO:0000981">
    <property type="term" value="F:DNA-binding transcription factor activity, RNA polymerase II-specific"/>
    <property type="evidence" value="ECO:0000250"/>
    <property type="project" value="UniProtKB"/>
</dbReference>
<dbReference type="GO" id="GO:0140297">
    <property type="term" value="F:DNA-binding transcription factor binding"/>
    <property type="evidence" value="ECO:0007669"/>
    <property type="project" value="Ensembl"/>
</dbReference>
<dbReference type="GO" id="GO:0046983">
    <property type="term" value="F:protein dimerization activity"/>
    <property type="evidence" value="ECO:0007669"/>
    <property type="project" value="InterPro"/>
</dbReference>
<dbReference type="GO" id="GO:0019901">
    <property type="term" value="F:protein kinase binding"/>
    <property type="evidence" value="ECO:0007669"/>
    <property type="project" value="Ensembl"/>
</dbReference>
<dbReference type="GO" id="GO:0000978">
    <property type="term" value="F:RNA polymerase II cis-regulatory region sequence-specific DNA binding"/>
    <property type="evidence" value="ECO:0007669"/>
    <property type="project" value="InterPro"/>
</dbReference>
<dbReference type="GO" id="GO:0043565">
    <property type="term" value="F:sequence-specific DNA binding"/>
    <property type="evidence" value="ECO:0000314"/>
    <property type="project" value="UniProtKB"/>
</dbReference>
<dbReference type="GO" id="GO:0000976">
    <property type="term" value="F:transcription cis-regulatory region binding"/>
    <property type="evidence" value="ECO:0000314"/>
    <property type="project" value="MGI"/>
</dbReference>
<dbReference type="GO" id="GO:0043276">
    <property type="term" value="P:anoikis"/>
    <property type="evidence" value="ECO:0000314"/>
    <property type="project" value="MGI"/>
</dbReference>
<dbReference type="GO" id="GO:0071398">
    <property type="term" value="P:cellular response to fatty acid"/>
    <property type="evidence" value="ECO:0007669"/>
    <property type="project" value="Ensembl"/>
</dbReference>
<dbReference type="GO" id="GO:0071456">
    <property type="term" value="P:cellular response to hypoxia"/>
    <property type="evidence" value="ECO:0007669"/>
    <property type="project" value="Ensembl"/>
</dbReference>
<dbReference type="GO" id="GO:1990090">
    <property type="term" value="P:cellular response to nerve growth factor stimulus"/>
    <property type="evidence" value="ECO:0007669"/>
    <property type="project" value="Ensembl"/>
</dbReference>
<dbReference type="GO" id="GO:0071466">
    <property type="term" value="P:cellular response to xenobiotic stimulus"/>
    <property type="evidence" value="ECO:0000314"/>
    <property type="project" value="MGI"/>
</dbReference>
<dbReference type="GO" id="GO:0000077">
    <property type="term" value="P:DNA damage checkpoint signaling"/>
    <property type="evidence" value="ECO:0000250"/>
    <property type="project" value="UniProtKB"/>
</dbReference>
<dbReference type="GO" id="GO:0006351">
    <property type="term" value="P:DNA-templated transcription"/>
    <property type="evidence" value="ECO:0000314"/>
    <property type="project" value="UniProtKB"/>
</dbReference>
<dbReference type="GO" id="GO:0030900">
    <property type="term" value="P:forebrain development"/>
    <property type="evidence" value="ECO:0000315"/>
    <property type="project" value="MGI"/>
</dbReference>
<dbReference type="GO" id="GO:0072332">
    <property type="term" value="P:intrinsic apoptotic signaling pathway by p53 class mediator"/>
    <property type="evidence" value="ECO:0000314"/>
    <property type="project" value="MGI"/>
</dbReference>
<dbReference type="GO" id="GO:0008630">
    <property type="term" value="P:intrinsic apoptotic signaling pathway in response to DNA damage"/>
    <property type="evidence" value="ECO:0007669"/>
    <property type="project" value="Ensembl"/>
</dbReference>
<dbReference type="GO" id="GO:1990086">
    <property type="term" value="P:lens fiber cell apoptotic process"/>
    <property type="evidence" value="ECO:0000314"/>
    <property type="project" value="MGI"/>
</dbReference>
<dbReference type="GO" id="GO:0048255">
    <property type="term" value="P:mRNA stabilization"/>
    <property type="evidence" value="ECO:0007669"/>
    <property type="project" value="Ensembl"/>
</dbReference>
<dbReference type="GO" id="GO:0045599">
    <property type="term" value="P:negative regulation of fat cell differentiation"/>
    <property type="evidence" value="ECO:0000314"/>
    <property type="project" value="UniProtKB"/>
</dbReference>
<dbReference type="GO" id="GO:0070345">
    <property type="term" value="P:negative regulation of fat cell proliferation"/>
    <property type="evidence" value="ECO:0000315"/>
    <property type="project" value="UniProtKB"/>
</dbReference>
<dbReference type="GO" id="GO:0000122">
    <property type="term" value="P:negative regulation of transcription by RNA polymerase II"/>
    <property type="evidence" value="ECO:0007669"/>
    <property type="project" value="Ensembl"/>
</dbReference>
<dbReference type="GO" id="GO:0043065">
    <property type="term" value="P:positive regulation of apoptotic process"/>
    <property type="evidence" value="ECO:0007669"/>
    <property type="project" value="Ensembl"/>
</dbReference>
<dbReference type="GO" id="GO:0045893">
    <property type="term" value="P:positive regulation of DNA-templated transcription"/>
    <property type="evidence" value="ECO:0000314"/>
    <property type="project" value="MGI"/>
</dbReference>
<dbReference type="GO" id="GO:0048146">
    <property type="term" value="P:positive regulation of fibroblast proliferation"/>
    <property type="evidence" value="ECO:0007669"/>
    <property type="project" value="Ensembl"/>
</dbReference>
<dbReference type="GO" id="GO:0060252">
    <property type="term" value="P:positive regulation of glial cell proliferation"/>
    <property type="evidence" value="ECO:0007669"/>
    <property type="project" value="Ensembl"/>
</dbReference>
<dbReference type="GO" id="GO:0045944">
    <property type="term" value="P:positive regulation of transcription by RNA polymerase II"/>
    <property type="evidence" value="ECO:0000314"/>
    <property type="project" value="MGI"/>
</dbReference>
<dbReference type="GO" id="GO:0051726">
    <property type="term" value="P:regulation of cell cycle"/>
    <property type="evidence" value="ECO:0000314"/>
    <property type="project" value="MGI"/>
</dbReference>
<dbReference type="GO" id="GO:0006355">
    <property type="term" value="P:regulation of DNA-templated transcription"/>
    <property type="evidence" value="ECO:0000314"/>
    <property type="project" value="MGI"/>
</dbReference>
<dbReference type="GO" id="GO:2000045">
    <property type="term" value="P:regulation of G1/S transition of mitotic cell cycle"/>
    <property type="evidence" value="ECO:0007669"/>
    <property type="project" value="Ensembl"/>
</dbReference>
<dbReference type="GO" id="GO:0032496">
    <property type="term" value="P:response to lipopolysaccharide"/>
    <property type="evidence" value="ECO:0000314"/>
    <property type="project" value="UniProt"/>
</dbReference>
<dbReference type="GO" id="GO:0007283">
    <property type="term" value="P:spermatogenesis"/>
    <property type="evidence" value="ECO:0007669"/>
    <property type="project" value="Ensembl"/>
</dbReference>
<dbReference type="CDD" id="cd14660">
    <property type="entry name" value="E2F_DD"/>
    <property type="match status" value="1"/>
</dbReference>
<dbReference type="FunFam" id="1.10.10.10:FF:000008">
    <property type="entry name" value="E2F transcription factor 1"/>
    <property type="match status" value="1"/>
</dbReference>
<dbReference type="Gene3D" id="6.10.250.540">
    <property type="match status" value="1"/>
</dbReference>
<dbReference type="Gene3D" id="1.10.10.10">
    <property type="entry name" value="Winged helix-like DNA-binding domain superfamily/Winged helix DNA-binding domain"/>
    <property type="match status" value="1"/>
</dbReference>
<dbReference type="InterPro" id="IPR015633">
    <property type="entry name" value="E2F"/>
</dbReference>
<dbReference type="InterPro" id="IPR037241">
    <property type="entry name" value="E2F-DP_heterodim"/>
</dbReference>
<dbReference type="InterPro" id="IPR032198">
    <property type="entry name" value="E2F_CC-MB"/>
</dbReference>
<dbReference type="InterPro" id="IPR003316">
    <property type="entry name" value="E2F_WHTH_DNA-bd_dom"/>
</dbReference>
<dbReference type="InterPro" id="IPR036388">
    <property type="entry name" value="WH-like_DNA-bd_sf"/>
</dbReference>
<dbReference type="InterPro" id="IPR036390">
    <property type="entry name" value="WH_DNA-bd_sf"/>
</dbReference>
<dbReference type="PANTHER" id="PTHR12081">
    <property type="entry name" value="TRANSCRIPTION FACTOR E2F"/>
    <property type="match status" value="1"/>
</dbReference>
<dbReference type="PANTHER" id="PTHR12081:SF43">
    <property type="entry name" value="TRANSCRIPTION FACTOR E2F1"/>
    <property type="match status" value="1"/>
</dbReference>
<dbReference type="Pfam" id="PF16421">
    <property type="entry name" value="E2F_CC-MB"/>
    <property type="match status" value="1"/>
</dbReference>
<dbReference type="Pfam" id="PF02319">
    <property type="entry name" value="E2F_TDP"/>
    <property type="match status" value="1"/>
</dbReference>
<dbReference type="SMART" id="SM01372">
    <property type="entry name" value="E2F_TDP"/>
    <property type="match status" value="1"/>
</dbReference>
<dbReference type="SUPFAM" id="SSF144074">
    <property type="entry name" value="E2F-DP heterodimerization region"/>
    <property type="match status" value="1"/>
</dbReference>
<dbReference type="SUPFAM" id="SSF46785">
    <property type="entry name" value="Winged helix' DNA-binding domain"/>
    <property type="match status" value="1"/>
</dbReference>